<keyword id="KW-0028">Amino-acid biosynthesis</keyword>
<keyword id="KW-0220">Diaminopimelate biosynthesis</keyword>
<keyword id="KW-0457">Lysine biosynthesis</keyword>
<keyword id="KW-0486">Methionine biosynthesis</keyword>
<keyword id="KW-0521">NADP</keyword>
<keyword id="KW-0560">Oxidoreductase</keyword>
<keyword id="KW-1185">Reference proteome</keyword>
<keyword id="KW-0791">Threonine biosynthesis</keyword>
<protein>
    <recommendedName>
        <fullName evidence="1">Aspartate-semialdehyde dehydrogenase</fullName>
        <shortName evidence="1">ASA dehydrogenase</shortName>
        <shortName evidence="1">ASADH</shortName>
        <ecNumber evidence="1">1.2.1.11</ecNumber>
    </recommendedName>
    <alternativeName>
        <fullName evidence="1">Aspartate-beta-semialdehyde dehydrogenase</fullName>
    </alternativeName>
</protein>
<accession>Q89AB8</accession>
<sequence>MKKNIGLIGWRGMVGSVLVERMICENDFFHFNPIFFSTSQKNSKGPTINGEYFGVLKDAYDLDILKELDILISCQGSDYTNKVYFKLRDIGWNGYWIDAASVLRMNQDTVIILDPVNSNTIRESIDSGFKTFVGGNCTVSLMLMSLGGLFSEKLIEWITVSTYQAASGSGAKYIEELLMQMGSMYTEASGYLGNPAHSILNIEKKVRNLSCSDKFPKKNFKVPLAGSLIPWIDKKMRNGQSREEWKIQAETNKILSSNKDILIDGLCVRIGALRCHSQSFVIKLKKDISIPEIEQILLNHNSWTKVIPNRKHDTMTELTPAAVTGTLNTPVGRLRKLNIGQKYLSAFTVGDQLLWGASEPLRRMLKFLI</sequence>
<evidence type="ECO:0000255" key="1">
    <source>
        <dbReference type="HAMAP-Rule" id="MF_02121"/>
    </source>
</evidence>
<feature type="chain" id="PRO_0000141365" description="Aspartate-semialdehyde dehydrogenase">
    <location>
        <begin position="1"/>
        <end position="369"/>
    </location>
</feature>
<feature type="active site" description="Acyl-thioester intermediate" evidence="1">
    <location>
        <position position="137"/>
    </location>
</feature>
<feature type="active site" description="Proton acceptor" evidence="1">
    <location>
        <position position="276"/>
    </location>
</feature>
<feature type="binding site" evidence="1">
    <location>
        <begin position="11"/>
        <end position="14"/>
    </location>
    <ligand>
        <name>NADP(+)</name>
        <dbReference type="ChEBI" id="CHEBI:58349"/>
    </ligand>
</feature>
<feature type="binding site" evidence="1">
    <location>
        <begin position="38"/>
        <end position="39"/>
    </location>
    <ligand>
        <name>NADP(+)</name>
        <dbReference type="ChEBI" id="CHEBI:58349"/>
    </ligand>
</feature>
<feature type="binding site" evidence="1">
    <location>
        <position position="75"/>
    </location>
    <ligand>
        <name>NADP(+)</name>
        <dbReference type="ChEBI" id="CHEBI:58349"/>
    </ligand>
</feature>
<feature type="binding site" evidence="1">
    <location>
        <position position="104"/>
    </location>
    <ligand>
        <name>phosphate</name>
        <dbReference type="ChEBI" id="CHEBI:43474"/>
    </ligand>
</feature>
<feature type="binding site" evidence="1">
    <location>
        <position position="164"/>
    </location>
    <ligand>
        <name>substrate</name>
    </ligand>
</feature>
<feature type="binding site" evidence="1">
    <location>
        <begin position="167"/>
        <end position="168"/>
    </location>
    <ligand>
        <name>NADP(+)</name>
        <dbReference type="ChEBI" id="CHEBI:58349"/>
    </ligand>
</feature>
<feature type="binding site" evidence="1">
    <location>
        <position position="195"/>
    </location>
    <ligand>
        <name>NADP(+)</name>
        <dbReference type="ChEBI" id="CHEBI:58349"/>
    </ligand>
</feature>
<feature type="binding site" evidence="1">
    <location>
        <position position="243"/>
    </location>
    <ligand>
        <name>substrate</name>
    </ligand>
</feature>
<feature type="binding site" evidence="1">
    <location>
        <position position="246"/>
    </location>
    <ligand>
        <name>phosphate</name>
        <dbReference type="ChEBI" id="CHEBI:43474"/>
    </ligand>
</feature>
<feature type="binding site" evidence="1">
    <location>
        <position position="269"/>
    </location>
    <ligand>
        <name>substrate</name>
    </ligand>
</feature>
<feature type="binding site" evidence="1">
    <location>
        <position position="352"/>
    </location>
    <ligand>
        <name>NADP(+)</name>
        <dbReference type="ChEBI" id="CHEBI:58349"/>
    </ligand>
</feature>
<reference key="1">
    <citation type="journal article" date="2003" name="Proc. Natl. Acad. Sci. U.S.A.">
        <title>Reductive genome evolution in Buchnera aphidicola.</title>
        <authorList>
            <person name="van Ham R.C.H.J."/>
            <person name="Kamerbeek J."/>
            <person name="Palacios C."/>
            <person name="Rausell C."/>
            <person name="Abascal F."/>
            <person name="Bastolla U."/>
            <person name="Fernandez J.M."/>
            <person name="Jimenez L."/>
            <person name="Postigo M."/>
            <person name="Silva F.J."/>
            <person name="Tamames J."/>
            <person name="Viguera E."/>
            <person name="Latorre A."/>
            <person name="Valencia A."/>
            <person name="Moran F."/>
            <person name="Moya A."/>
        </authorList>
    </citation>
    <scope>NUCLEOTIDE SEQUENCE [LARGE SCALE GENOMIC DNA]</scope>
    <source>
        <strain>Bp</strain>
    </source>
</reference>
<gene>
    <name evidence="1" type="primary">asd</name>
    <name type="ordered locus">bbp_398</name>
</gene>
<proteinExistence type="inferred from homology"/>
<dbReference type="EC" id="1.2.1.11" evidence="1"/>
<dbReference type="EMBL" id="AE016826">
    <property type="protein sequence ID" value="AAO27110.1"/>
    <property type="molecule type" value="Genomic_DNA"/>
</dbReference>
<dbReference type="RefSeq" id="WP_011091511.1">
    <property type="nucleotide sequence ID" value="NC_004545.1"/>
</dbReference>
<dbReference type="SMR" id="Q89AB8"/>
<dbReference type="STRING" id="224915.bbp_398"/>
<dbReference type="KEGG" id="bab:bbp_398"/>
<dbReference type="eggNOG" id="COG0136">
    <property type="taxonomic scope" value="Bacteria"/>
</dbReference>
<dbReference type="HOGENOM" id="CLU_066397_0_0_6"/>
<dbReference type="OrthoDB" id="9022717at2"/>
<dbReference type="UniPathway" id="UPA00034">
    <property type="reaction ID" value="UER00016"/>
</dbReference>
<dbReference type="UniPathway" id="UPA00050">
    <property type="reaction ID" value="UER00463"/>
</dbReference>
<dbReference type="UniPathway" id="UPA00051">
    <property type="reaction ID" value="UER00464"/>
</dbReference>
<dbReference type="Proteomes" id="UP000000601">
    <property type="component" value="Chromosome"/>
</dbReference>
<dbReference type="GO" id="GO:0004073">
    <property type="term" value="F:aspartate-semialdehyde dehydrogenase activity"/>
    <property type="evidence" value="ECO:0007669"/>
    <property type="project" value="UniProtKB-UniRule"/>
</dbReference>
<dbReference type="GO" id="GO:0051287">
    <property type="term" value="F:NAD binding"/>
    <property type="evidence" value="ECO:0007669"/>
    <property type="project" value="InterPro"/>
</dbReference>
<dbReference type="GO" id="GO:0050661">
    <property type="term" value="F:NADP binding"/>
    <property type="evidence" value="ECO:0007669"/>
    <property type="project" value="UniProtKB-UniRule"/>
</dbReference>
<dbReference type="GO" id="GO:0046983">
    <property type="term" value="F:protein dimerization activity"/>
    <property type="evidence" value="ECO:0007669"/>
    <property type="project" value="InterPro"/>
</dbReference>
<dbReference type="GO" id="GO:0071266">
    <property type="term" value="P:'de novo' L-methionine biosynthetic process"/>
    <property type="evidence" value="ECO:0007669"/>
    <property type="project" value="UniProtKB-UniRule"/>
</dbReference>
<dbReference type="GO" id="GO:0019877">
    <property type="term" value="P:diaminopimelate biosynthetic process"/>
    <property type="evidence" value="ECO:0007669"/>
    <property type="project" value="UniProtKB-UniRule"/>
</dbReference>
<dbReference type="GO" id="GO:0009097">
    <property type="term" value="P:isoleucine biosynthetic process"/>
    <property type="evidence" value="ECO:0007669"/>
    <property type="project" value="InterPro"/>
</dbReference>
<dbReference type="GO" id="GO:0009089">
    <property type="term" value="P:lysine biosynthetic process via diaminopimelate"/>
    <property type="evidence" value="ECO:0007669"/>
    <property type="project" value="UniProtKB-UniRule"/>
</dbReference>
<dbReference type="GO" id="GO:0009088">
    <property type="term" value="P:threonine biosynthetic process"/>
    <property type="evidence" value="ECO:0007669"/>
    <property type="project" value="UniProtKB-UniRule"/>
</dbReference>
<dbReference type="CDD" id="cd23938">
    <property type="entry name" value="ASADH_C_bac_like"/>
    <property type="match status" value="1"/>
</dbReference>
<dbReference type="CDD" id="cd02314">
    <property type="entry name" value="VcASADH1_like_N"/>
    <property type="match status" value="1"/>
</dbReference>
<dbReference type="Gene3D" id="3.30.360.10">
    <property type="entry name" value="Dihydrodipicolinate Reductase, domain 2"/>
    <property type="match status" value="1"/>
</dbReference>
<dbReference type="Gene3D" id="3.40.50.720">
    <property type="entry name" value="NAD(P)-binding Rossmann-like Domain"/>
    <property type="match status" value="1"/>
</dbReference>
<dbReference type="HAMAP" id="MF_02121">
    <property type="entry name" value="ASADH"/>
    <property type="match status" value="1"/>
</dbReference>
<dbReference type="InterPro" id="IPR000319">
    <property type="entry name" value="Asp-semialdehyde_DH_CS"/>
</dbReference>
<dbReference type="InterPro" id="IPR011534">
    <property type="entry name" value="Asp_ADH_gamma-type"/>
</dbReference>
<dbReference type="InterPro" id="IPR012080">
    <property type="entry name" value="Asp_semialdehyde_DH"/>
</dbReference>
<dbReference type="InterPro" id="IPR036291">
    <property type="entry name" value="NAD(P)-bd_dom_sf"/>
</dbReference>
<dbReference type="InterPro" id="IPR000534">
    <property type="entry name" value="Semialdehyde_DH_NAD-bd"/>
</dbReference>
<dbReference type="InterPro" id="IPR012280">
    <property type="entry name" value="Semialdhyde_DH_dimer_dom"/>
</dbReference>
<dbReference type="NCBIfam" id="TIGR01745">
    <property type="entry name" value="asd_gamma"/>
    <property type="match status" value="1"/>
</dbReference>
<dbReference type="NCBIfam" id="NF005144">
    <property type="entry name" value="PRK06598.1"/>
    <property type="match status" value="1"/>
</dbReference>
<dbReference type="PANTHER" id="PTHR46278:SF4">
    <property type="entry name" value="ASPARTATE-SEMIALDEHYDE DEHYDROGENASE"/>
    <property type="match status" value="1"/>
</dbReference>
<dbReference type="PANTHER" id="PTHR46278">
    <property type="entry name" value="DEHYDROGENASE, PUTATIVE-RELATED"/>
    <property type="match status" value="1"/>
</dbReference>
<dbReference type="Pfam" id="PF01118">
    <property type="entry name" value="Semialdhyde_dh"/>
    <property type="match status" value="1"/>
</dbReference>
<dbReference type="Pfam" id="PF02774">
    <property type="entry name" value="Semialdhyde_dhC"/>
    <property type="match status" value="1"/>
</dbReference>
<dbReference type="PIRSF" id="PIRSF000148">
    <property type="entry name" value="ASA_dh"/>
    <property type="match status" value="1"/>
</dbReference>
<dbReference type="SMART" id="SM00859">
    <property type="entry name" value="Semialdhyde_dh"/>
    <property type="match status" value="1"/>
</dbReference>
<dbReference type="SUPFAM" id="SSF55347">
    <property type="entry name" value="Glyceraldehyde-3-phosphate dehydrogenase-like, C-terminal domain"/>
    <property type="match status" value="1"/>
</dbReference>
<dbReference type="SUPFAM" id="SSF51735">
    <property type="entry name" value="NAD(P)-binding Rossmann-fold domains"/>
    <property type="match status" value="1"/>
</dbReference>
<dbReference type="PROSITE" id="PS01103">
    <property type="entry name" value="ASD"/>
    <property type="match status" value="1"/>
</dbReference>
<name>DHAS_BUCBP</name>
<comment type="function">
    <text evidence="1">Catalyzes the NADPH-dependent formation of L-aspartate-semialdehyde (L-ASA) by the reductive dephosphorylation of L-aspartyl-4-phosphate.</text>
</comment>
<comment type="catalytic activity">
    <reaction evidence="1">
        <text>L-aspartate 4-semialdehyde + phosphate + NADP(+) = 4-phospho-L-aspartate + NADPH + H(+)</text>
        <dbReference type="Rhea" id="RHEA:24284"/>
        <dbReference type="ChEBI" id="CHEBI:15378"/>
        <dbReference type="ChEBI" id="CHEBI:43474"/>
        <dbReference type="ChEBI" id="CHEBI:57535"/>
        <dbReference type="ChEBI" id="CHEBI:57783"/>
        <dbReference type="ChEBI" id="CHEBI:58349"/>
        <dbReference type="ChEBI" id="CHEBI:537519"/>
        <dbReference type="EC" id="1.2.1.11"/>
    </reaction>
</comment>
<comment type="pathway">
    <text evidence="1">Amino-acid biosynthesis; L-lysine biosynthesis via DAP pathway; (S)-tetrahydrodipicolinate from L-aspartate: step 2/4.</text>
</comment>
<comment type="pathway">
    <text evidence="1">Amino-acid biosynthesis; L-methionine biosynthesis via de novo pathway; L-homoserine from L-aspartate: step 2/3.</text>
</comment>
<comment type="pathway">
    <text evidence="1">Amino-acid biosynthesis; L-threonine biosynthesis; L-threonine from L-aspartate: step 2/5.</text>
</comment>
<comment type="subunit">
    <text evidence="1">Homodimer.</text>
</comment>
<comment type="similarity">
    <text evidence="1">Belongs to the aspartate-semialdehyde dehydrogenase family.</text>
</comment>
<organism>
    <name type="scientific">Buchnera aphidicola subsp. Baizongia pistaciae (strain Bp)</name>
    <dbReference type="NCBI Taxonomy" id="224915"/>
    <lineage>
        <taxon>Bacteria</taxon>
        <taxon>Pseudomonadati</taxon>
        <taxon>Pseudomonadota</taxon>
        <taxon>Gammaproteobacteria</taxon>
        <taxon>Enterobacterales</taxon>
        <taxon>Erwiniaceae</taxon>
        <taxon>Buchnera</taxon>
    </lineage>
</organism>